<keyword id="KW-0963">Cytoplasm</keyword>
<keyword id="KW-0312">Gluconeogenesis</keyword>
<keyword id="KW-0324">Glycolysis</keyword>
<keyword id="KW-0413">Isomerase</keyword>
<keyword id="KW-1185">Reference proteome</keyword>
<feature type="chain" id="PRO_1000058113" description="Triosephosphate isomerase">
    <location>
        <begin position="1"/>
        <end position="248"/>
    </location>
</feature>
<feature type="active site" description="Electrophile" evidence="1">
    <location>
        <position position="93"/>
    </location>
</feature>
<feature type="active site" description="Proton acceptor" evidence="1">
    <location>
        <position position="163"/>
    </location>
</feature>
<feature type="binding site" evidence="1">
    <location>
        <begin position="9"/>
        <end position="11"/>
    </location>
    <ligand>
        <name>substrate</name>
    </ligand>
</feature>
<feature type="binding site" evidence="1">
    <location>
        <position position="169"/>
    </location>
    <ligand>
        <name>substrate</name>
    </ligand>
</feature>
<feature type="binding site" evidence="1">
    <location>
        <position position="208"/>
    </location>
    <ligand>
        <name>substrate</name>
    </ligand>
</feature>
<feature type="binding site" evidence="1">
    <location>
        <begin position="229"/>
        <end position="230"/>
    </location>
    <ligand>
        <name>substrate</name>
    </ligand>
</feature>
<name>TPIS_JANSC</name>
<proteinExistence type="inferred from homology"/>
<evidence type="ECO:0000255" key="1">
    <source>
        <dbReference type="HAMAP-Rule" id="MF_00147"/>
    </source>
</evidence>
<protein>
    <recommendedName>
        <fullName evidence="1">Triosephosphate isomerase</fullName>
        <shortName evidence="1">TIM</shortName>
        <shortName evidence="1">TPI</shortName>
        <ecNumber evidence="1">5.3.1.1</ecNumber>
    </recommendedName>
    <alternativeName>
        <fullName evidence="1">Triose-phosphate isomerase</fullName>
    </alternativeName>
</protein>
<reference key="1">
    <citation type="submission" date="2006-02" db="EMBL/GenBank/DDBJ databases">
        <title>Complete sequence of chromosome of Jannaschia sp. CCS1.</title>
        <authorList>
            <consortium name="US DOE Joint Genome Institute"/>
            <person name="Copeland A."/>
            <person name="Lucas S."/>
            <person name="Lapidus A."/>
            <person name="Barry K."/>
            <person name="Detter J.C."/>
            <person name="Glavina del Rio T."/>
            <person name="Hammon N."/>
            <person name="Israni S."/>
            <person name="Pitluck S."/>
            <person name="Brettin T."/>
            <person name="Bruce D."/>
            <person name="Han C."/>
            <person name="Tapia R."/>
            <person name="Gilna P."/>
            <person name="Chertkov O."/>
            <person name="Saunders E."/>
            <person name="Schmutz J."/>
            <person name="Larimer F."/>
            <person name="Land M."/>
            <person name="Kyrpides N."/>
            <person name="Lykidis A."/>
            <person name="Moran M.A."/>
            <person name="Belas R."/>
            <person name="Ye W."/>
            <person name="Buchan A."/>
            <person name="Gonzalez J.M."/>
            <person name="Schell M.A."/>
            <person name="Richardson P."/>
        </authorList>
    </citation>
    <scope>NUCLEOTIDE SEQUENCE [LARGE SCALE GENOMIC DNA]</scope>
    <source>
        <strain>CCS1</strain>
    </source>
</reference>
<organism>
    <name type="scientific">Jannaschia sp. (strain CCS1)</name>
    <dbReference type="NCBI Taxonomy" id="290400"/>
    <lineage>
        <taxon>Bacteria</taxon>
        <taxon>Pseudomonadati</taxon>
        <taxon>Pseudomonadota</taxon>
        <taxon>Alphaproteobacteria</taxon>
        <taxon>Rhodobacterales</taxon>
        <taxon>Roseobacteraceae</taxon>
        <taxon>Jannaschia</taxon>
    </lineage>
</organism>
<comment type="function">
    <text evidence="1">Involved in the gluconeogenesis. Catalyzes stereospecifically the conversion of dihydroxyacetone phosphate (DHAP) to D-glyceraldehyde-3-phosphate (G3P).</text>
</comment>
<comment type="catalytic activity">
    <reaction evidence="1">
        <text>D-glyceraldehyde 3-phosphate = dihydroxyacetone phosphate</text>
        <dbReference type="Rhea" id="RHEA:18585"/>
        <dbReference type="ChEBI" id="CHEBI:57642"/>
        <dbReference type="ChEBI" id="CHEBI:59776"/>
        <dbReference type="EC" id="5.3.1.1"/>
    </reaction>
</comment>
<comment type="pathway">
    <text evidence="1">Carbohydrate biosynthesis; gluconeogenesis.</text>
</comment>
<comment type="pathway">
    <text evidence="1">Carbohydrate degradation; glycolysis; D-glyceraldehyde 3-phosphate from glycerone phosphate: step 1/1.</text>
</comment>
<comment type="subunit">
    <text evidence="1">Homodimer.</text>
</comment>
<comment type="subcellular location">
    <subcellularLocation>
        <location evidence="1">Cytoplasm</location>
    </subcellularLocation>
</comment>
<comment type="similarity">
    <text evidence="1">Belongs to the triosephosphate isomerase family.</text>
</comment>
<gene>
    <name evidence="1" type="primary">tpiA</name>
    <name type="ordered locus">Jann_1733</name>
</gene>
<dbReference type="EC" id="5.3.1.1" evidence="1"/>
<dbReference type="EMBL" id="CP000264">
    <property type="protein sequence ID" value="ABD54650.1"/>
    <property type="molecule type" value="Genomic_DNA"/>
</dbReference>
<dbReference type="RefSeq" id="WP_011454855.1">
    <property type="nucleotide sequence ID" value="NC_007802.1"/>
</dbReference>
<dbReference type="SMR" id="Q28RL2"/>
<dbReference type="STRING" id="290400.Jann_1733"/>
<dbReference type="KEGG" id="jan:Jann_1733"/>
<dbReference type="eggNOG" id="COG0149">
    <property type="taxonomic scope" value="Bacteria"/>
</dbReference>
<dbReference type="HOGENOM" id="CLU_024251_2_1_5"/>
<dbReference type="OrthoDB" id="9809429at2"/>
<dbReference type="UniPathway" id="UPA00109">
    <property type="reaction ID" value="UER00189"/>
</dbReference>
<dbReference type="UniPathway" id="UPA00138"/>
<dbReference type="Proteomes" id="UP000008326">
    <property type="component" value="Chromosome"/>
</dbReference>
<dbReference type="GO" id="GO:0005829">
    <property type="term" value="C:cytosol"/>
    <property type="evidence" value="ECO:0007669"/>
    <property type="project" value="TreeGrafter"/>
</dbReference>
<dbReference type="GO" id="GO:0004807">
    <property type="term" value="F:triose-phosphate isomerase activity"/>
    <property type="evidence" value="ECO:0007669"/>
    <property type="project" value="UniProtKB-UniRule"/>
</dbReference>
<dbReference type="GO" id="GO:0006094">
    <property type="term" value="P:gluconeogenesis"/>
    <property type="evidence" value="ECO:0007669"/>
    <property type="project" value="UniProtKB-UniRule"/>
</dbReference>
<dbReference type="GO" id="GO:0046166">
    <property type="term" value="P:glyceraldehyde-3-phosphate biosynthetic process"/>
    <property type="evidence" value="ECO:0007669"/>
    <property type="project" value="TreeGrafter"/>
</dbReference>
<dbReference type="GO" id="GO:0019563">
    <property type="term" value="P:glycerol catabolic process"/>
    <property type="evidence" value="ECO:0007669"/>
    <property type="project" value="TreeGrafter"/>
</dbReference>
<dbReference type="GO" id="GO:0006096">
    <property type="term" value="P:glycolytic process"/>
    <property type="evidence" value="ECO:0007669"/>
    <property type="project" value="UniProtKB-UniRule"/>
</dbReference>
<dbReference type="CDD" id="cd00311">
    <property type="entry name" value="TIM"/>
    <property type="match status" value="1"/>
</dbReference>
<dbReference type="FunFam" id="3.20.20.70:FF:000016">
    <property type="entry name" value="Triosephosphate isomerase"/>
    <property type="match status" value="1"/>
</dbReference>
<dbReference type="Gene3D" id="3.20.20.70">
    <property type="entry name" value="Aldolase class I"/>
    <property type="match status" value="1"/>
</dbReference>
<dbReference type="HAMAP" id="MF_00147_B">
    <property type="entry name" value="TIM_B"/>
    <property type="match status" value="1"/>
</dbReference>
<dbReference type="InterPro" id="IPR013785">
    <property type="entry name" value="Aldolase_TIM"/>
</dbReference>
<dbReference type="InterPro" id="IPR035990">
    <property type="entry name" value="TIM_sf"/>
</dbReference>
<dbReference type="InterPro" id="IPR022896">
    <property type="entry name" value="TrioseP_Isoase_bac/euk"/>
</dbReference>
<dbReference type="InterPro" id="IPR000652">
    <property type="entry name" value="Triosephosphate_isomerase"/>
</dbReference>
<dbReference type="InterPro" id="IPR020861">
    <property type="entry name" value="Triosephosphate_isomerase_AS"/>
</dbReference>
<dbReference type="NCBIfam" id="TIGR00419">
    <property type="entry name" value="tim"/>
    <property type="match status" value="1"/>
</dbReference>
<dbReference type="PANTHER" id="PTHR21139">
    <property type="entry name" value="TRIOSEPHOSPHATE ISOMERASE"/>
    <property type="match status" value="1"/>
</dbReference>
<dbReference type="PANTHER" id="PTHR21139:SF42">
    <property type="entry name" value="TRIOSEPHOSPHATE ISOMERASE"/>
    <property type="match status" value="1"/>
</dbReference>
<dbReference type="Pfam" id="PF00121">
    <property type="entry name" value="TIM"/>
    <property type="match status" value="1"/>
</dbReference>
<dbReference type="SUPFAM" id="SSF51351">
    <property type="entry name" value="Triosephosphate isomerase (TIM)"/>
    <property type="match status" value="1"/>
</dbReference>
<dbReference type="PROSITE" id="PS00171">
    <property type="entry name" value="TIM_1"/>
    <property type="match status" value="1"/>
</dbReference>
<dbReference type="PROSITE" id="PS51440">
    <property type="entry name" value="TIM_2"/>
    <property type="match status" value="1"/>
</dbReference>
<sequence>MARKLAAGNWKMNGVEADLAEVDALGEAVAAANCDVLLCPPATLIAPMAKRAGLMDLYVGGQTCHTAASGAHTGDVSAAMLADAGASHVILGHSERRADHGERSEDVAAQVTAAIDANLIAIICVGETEAERDANVTLNVVSSQLAGSIPTGATPAQIVVAYEPVWAIGTGRTPTLEQIAEVHDHIRSELAARRGSAANDIPLLYGGSVKPGNAAEIFAVSNVDGALVGGASLKASDFGGIIAALSAA</sequence>
<accession>Q28RL2</accession>